<gene>
    <name type="primary">triN</name>
    <name type="ordered locus">STK_09080</name>
</gene>
<organism>
    <name type="scientific">Sulfurisphaera tokodaii (strain DSM 16993 / JCM 10545 / NBRC 100140 / 7)</name>
    <name type="common">Sulfolobus tokodaii</name>
    <dbReference type="NCBI Taxonomy" id="273063"/>
    <lineage>
        <taxon>Archaea</taxon>
        <taxon>Thermoproteota</taxon>
        <taxon>Thermoprotei</taxon>
        <taxon>Sulfolobales</taxon>
        <taxon>Sulfolobaceae</taxon>
        <taxon>Sulfurisphaera</taxon>
    </lineage>
</organism>
<sequence>MTITKRKNTFYTSQFISYMKGYYLHPDIRGNLVAFTSDDDVWLMTLEDMKPIRVTSGQGVAIRPKISPDGKKIAYTIIWLRKGKGGGDIFITGNGETKRITFFGSMNTRVLGWLSDDEILVLTDFHTPFPQWSETYKININDGTMEKIPFGPISNIAISGDIIVIARGYQDLPFWKGYKGGTKGEFLISYDKGNT</sequence>
<proteinExistence type="inferred from homology"/>
<keyword id="KW-0963">Cytoplasm</keyword>
<keyword id="KW-0378">Hydrolase</keyword>
<keyword id="KW-0645">Protease</keyword>
<keyword id="KW-1185">Reference proteome</keyword>
<keyword id="KW-0720">Serine protease</keyword>
<dbReference type="EC" id="3.4.21.-"/>
<dbReference type="EMBL" id="BA000023">
    <property type="protein sequence ID" value="BAB65922.1"/>
    <property type="molecule type" value="Genomic_DNA"/>
</dbReference>
<dbReference type="SMR" id="Q973J1"/>
<dbReference type="STRING" id="273063.STK_09080"/>
<dbReference type="KEGG" id="sto:STK_09080"/>
<dbReference type="PATRIC" id="fig|273063.9.peg.1019"/>
<dbReference type="eggNOG" id="arCOG03384">
    <property type="taxonomic scope" value="Archaea"/>
</dbReference>
<dbReference type="Proteomes" id="UP000001015">
    <property type="component" value="Chromosome"/>
</dbReference>
<dbReference type="GO" id="GO:0005737">
    <property type="term" value="C:cytoplasm"/>
    <property type="evidence" value="ECO:0007669"/>
    <property type="project" value="UniProtKB-SubCell"/>
</dbReference>
<dbReference type="GO" id="GO:0008236">
    <property type="term" value="F:serine-type peptidase activity"/>
    <property type="evidence" value="ECO:0007669"/>
    <property type="project" value="UniProtKB-KW"/>
</dbReference>
<dbReference type="GO" id="GO:0006508">
    <property type="term" value="P:proteolysis"/>
    <property type="evidence" value="ECO:0007669"/>
    <property type="project" value="UniProtKB-KW"/>
</dbReference>
<dbReference type="Gene3D" id="2.120.10.60">
    <property type="entry name" value="Tricorn protease N-terminal domain"/>
    <property type="match status" value="1"/>
</dbReference>
<dbReference type="InterPro" id="IPR012393">
    <property type="entry name" value="Tricorn_protease"/>
</dbReference>
<dbReference type="PANTHER" id="PTHR43253">
    <property type="entry name" value="TRICORN PROTEASE HOMOLOG 2-RELATED"/>
    <property type="match status" value="1"/>
</dbReference>
<dbReference type="PANTHER" id="PTHR43253:SF1">
    <property type="entry name" value="TRICORN PROTEASE HOMOLOG 2-RELATED"/>
    <property type="match status" value="1"/>
</dbReference>
<dbReference type="SUPFAM" id="SSF69304">
    <property type="entry name" value="Tricorn protease N-terminal domain"/>
    <property type="match status" value="1"/>
</dbReference>
<accession>Q973J1</accession>
<evidence type="ECO:0000250" key="1"/>
<evidence type="ECO:0000305" key="2"/>
<feature type="chain" id="PRO_0000207195" description="Putative Tricorn-like protease N-terminal subunit">
    <location>
        <begin position="1"/>
        <end position="195"/>
    </location>
</feature>
<name>TRIN_SULTO</name>
<reference key="1">
    <citation type="journal article" date="2001" name="DNA Res.">
        <title>Complete genome sequence of an aerobic thermoacidophilic Crenarchaeon, Sulfolobus tokodaii strain7.</title>
        <authorList>
            <person name="Kawarabayasi Y."/>
            <person name="Hino Y."/>
            <person name="Horikawa H."/>
            <person name="Jin-no K."/>
            <person name="Takahashi M."/>
            <person name="Sekine M."/>
            <person name="Baba S."/>
            <person name="Ankai A."/>
            <person name="Kosugi H."/>
            <person name="Hosoyama A."/>
            <person name="Fukui S."/>
            <person name="Nagai Y."/>
            <person name="Nishijima K."/>
            <person name="Otsuka R."/>
            <person name="Nakazawa H."/>
            <person name="Takamiya M."/>
            <person name="Kato Y."/>
            <person name="Yoshizawa T."/>
            <person name="Tanaka T."/>
            <person name="Kudoh Y."/>
            <person name="Yamazaki J."/>
            <person name="Kushida N."/>
            <person name="Oguchi A."/>
            <person name="Aoki K."/>
            <person name="Masuda S."/>
            <person name="Yanagii M."/>
            <person name="Nishimura M."/>
            <person name="Yamagishi A."/>
            <person name="Oshima T."/>
            <person name="Kikuchi H."/>
        </authorList>
    </citation>
    <scope>NUCLEOTIDE SEQUENCE [LARGE SCALE GENOMIC DNA]</scope>
    <source>
        <strain>DSM 16993 / JCM 10545 / NBRC 100140 / 7</strain>
    </source>
</reference>
<protein>
    <recommendedName>
        <fullName>Putative Tricorn-like protease N-terminal subunit</fullName>
        <ecNumber>3.4.21.-</ecNumber>
    </recommendedName>
</protein>
<comment type="function">
    <text evidence="1">Degrades oligopeptides in a sequential manner.</text>
</comment>
<comment type="subcellular location">
    <subcellularLocation>
        <location evidence="1">Cytoplasm</location>
    </subcellularLocation>
</comment>
<comment type="similarity">
    <text evidence="2">Belongs to the peptidase S41B family.</text>
</comment>
<comment type="caution">
    <text evidence="2">Tricorn seems to be split into two ORFs in S.tokodaii, encoded on opposite strands and separated by approximately 279 kb.</text>
</comment>